<proteinExistence type="inferred from homology"/>
<sequence length="567" mass="63508">MAKNVNSKANGKKSGSVKRALKEKKQPEPEFSDSEDDEVDQEKLVEELDEDFDEVANMLGADVTDPEEKKQSKLERKRKRDEEATAEYTKPEVVDNEDDAQNDKFEDAGLSEPTMRAISDMGFKTMTKVQAKTIPPLLAGKDVLGAAKTGSGKTLAFLIPAIELLYSLKFKPRNGTGVIVVSPTRELALQIFGVARELMAHHTQTFGIVIGGANRRQEAEKLAKGVNLLIATPGRLLDHLQNTQGFVFKNLKALVIDEADRILEIGFEEEMKQIIKILPKEERQSMLFSATQTTKVEDLARISLRPGPLYINVVPETAASTADGLEQGYVVCDSDKRFLLLFSFLKKYSKKKIIVFLSSCNSVKYFGELLNYIDLPVLDLHGKQKQQKRTNTFFEFCNAKQGTLVCTDVAARGLDIPAVDWIIQFDPPDDPRDYIHRVGRTARGSNGKGKSLMFLTPSELGFLRYLKAANVPLNEYEFPTNKIVNIQSQLSKLIKSNYWLHQSAKDGYRSYLQAYASHHLKTVYQIDKLDLVKVAKSFGFDVPPKVNITIGASGKSIEKKHKKQKRA</sequence>
<gene>
    <name type="primary">HAS1</name>
    <name type="ORF">PICST_81459</name>
</gene>
<name>HAS1_PICST</name>
<feature type="chain" id="PRO_0000285142" description="ATP-dependent RNA helicase HAS1">
    <location>
        <begin position="1"/>
        <end position="567"/>
    </location>
</feature>
<feature type="domain" description="Helicase ATP-binding" evidence="3">
    <location>
        <begin position="134"/>
        <end position="310"/>
    </location>
</feature>
<feature type="domain" description="Helicase C-terminal" evidence="4">
    <location>
        <begin position="324"/>
        <end position="484"/>
    </location>
</feature>
<feature type="region of interest" description="Disordered" evidence="5">
    <location>
        <begin position="1"/>
        <end position="109"/>
    </location>
</feature>
<feature type="coiled-coil region" evidence="2">
    <location>
        <begin position="35"/>
        <end position="88"/>
    </location>
</feature>
<feature type="short sequence motif" description="Q motif">
    <location>
        <begin position="103"/>
        <end position="131"/>
    </location>
</feature>
<feature type="short sequence motif" description="DEAD box">
    <location>
        <begin position="257"/>
        <end position="260"/>
    </location>
</feature>
<feature type="compositionally biased region" description="Acidic residues" evidence="5">
    <location>
        <begin position="30"/>
        <end position="40"/>
    </location>
</feature>
<feature type="binding site" evidence="3">
    <location>
        <begin position="147"/>
        <end position="154"/>
    </location>
    <ligand>
        <name>ATP</name>
        <dbReference type="ChEBI" id="CHEBI:30616"/>
    </ligand>
</feature>
<reference key="1">
    <citation type="journal article" date="2007" name="Nat. Biotechnol.">
        <title>Genome sequence of the lignocellulose-bioconverting and xylose-fermenting yeast Pichia stipitis.</title>
        <authorList>
            <person name="Jeffries T.W."/>
            <person name="Grigoriev I.V."/>
            <person name="Grimwood J."/>
            <person name="Laplaza J.M."/>
            <person name="Aerts A."/>
            <person name="Salamov A."/>
            <person name="Schmutz J."/>
            <person name="Lindquist E."/>
            <person name="Dehal P."/>
            <person name="Shapiro H."/>
            <person name="Jin Y.-S."/>
            <person name="Passoth V."/>
            <person name="Richardson P.M."/>
        </authorList>
    </citation>
    <scope>NUCLEOTIDE SEQUENCE [LARGE SCALE GENOMIC DNA]</scope>
    <source>
        <strain>ATCC 58785 / CBS 6054 / NBRC 10063 / NRRL Y-11545</strain>
    </source>
</reference>
<comment type="function">
    <text>ATP-dependent RNA helicase involved in 40S ribosomal subunit biogenesis. Required for the processing and cleavage of 35S pre-rRNA at sites A0, A1, and A2, leading to mature 18S rRNA.</text>
</comment>
<comment type="catalytic activity">
    <reaction>
        <text>ATP + H2O = ADP + phosphate + H(+)</text>
        <dbReference type="Rhea" id="RHEA:13065"/>
        <dbReference type="ChEBI" id="CHEBI:15377"/>
        <dbReference type="ChEBI" id="CHEBI:15378"/>
        <dbReference type="ChEBI" id="CHEBI:30616"/>
        <dbReference type="ChEBI" id="CHEBI:43474"/>
        <dbReference type="ChEBI" id="CHEBI:456216"/>
        <dbReference type="EC" id="3.6.4.13"/>
    </reaction>
</comment>
<comment type="subunit">
    <text evidence="1">Associates in the nucleolus with the 60S and pre-60S ribosomal subunits.</text>
</comment>
<comment type="subcellular location">
    <subcellularLocation>
        <location evidence="1">Nucleus</location>
        <location evidence="1">Nucleolus</location>
    </subcellularLocation>
</comment>
<comment type="domain">
    <text>The Q motif is unique to and characteristic of the DEAD box family of RNA helicases and controls ATP binding and hydrolysis.</text>
</comment>
<comment type="similarity">
    <text evidence="6">Belongs to the DEAD box helicase family. DDX18/HAS1 subfamily.</text>
</comment>
<organism>
    <name type="scientific">Scheffersomyces stipitis (strain ATCC 58785 / CBS 6054 / NBRC 10063 / NRRL Y-11545)</name>
    <name type="common">Yeast</name>
    <name type="synonym">Pichia stipitis</name>
    <dbReference type="NCBI Taxonomy" id="322104"/>
    <lineage>
        <taxon>Eukaryota</taxon>
        <taxon>Fungi</taxon>
        <taxon>Dikarya</taxon>
        <taxon>Ascomycota</taxon>
        <taxon>Saccharomycotina</taxon>
        <taxon>Pichiomycetes</taxon>
        <taxon>Debaryomycetaceae</taxon>
        <taxon>Scheffersomyces</taxon>
    </lineage>
</organism>
<protein>
    <recommendedName>
        <fullName>ATP-dependent RNA helicase HAS1</fullName>
        <ecNumber>3.6.4.13</ecNumber>
    </recommendedName>
</protein>
<accession>A3LNR6</accession>
<evidence type="ECO:0000250" key="1"/>
<evidence type="ECO:0000255" key="2"/>
<evidence type="ECO:0000255" key="3">
    <source>
        <dbReference type="PROSITE-ProRule" id="PRU00541"/>
    </source>
</evidence>
<evidence type="ECO:0000255" key="4">
    <source>
        <dbReference type="PROSITE-ProRule" id="PRU00542"/>
    </source>
</evidence>
<evidence type="ECO:0000256" key="5">
    <source>
        <dbReference type="SAM" id="MobiDB-lite"/>
    </source>
</evidence>
<evidence type="ECO:0000305" key="6"/>
<dbReference type="EC" id="3.6.4.13"/>
<dbReference type="EMBL" id="CP000496">
    <property type="protein sequence ID" value="ABN64372.2"/>
    <property type="molecule type" value="Genomic_DNA"/>
</dbReference>
<dbReference type="RefSeq" id="XP_001382401.2">
    <property type="nucleotide sequence ID" value="XM_001382364.1"/>
</dbReference>
<dbReference type="SMR" id="A3LNR6"/>
<dbReference type="FunCoup" id="A3LNR6">
    <property type="interactions" value="1261"/>
</dbReference>
<dbReference type="STRING" id="322104.A3LNR6"/>
<dbReference type="GeneID" id="4836874"/>
<dbReference type="KEGG" id="pic:PICST_81459"/>
<dbReference type="eggNOG" id="KOG0342">
    <property type="taxonomic scope" value="Eukaryota"/>
</dbReference>
<dbReference type="HOGENOM" id="CLU_003041_26_5_1"/>
<dbReference type="InParanoid" id="A3LNR6"/>
<dbReference type="OMA" id="LMEFHSQ"/>
<dbReference type="OrthoDB" id="10259640at2759"/>
<dbReference type="Proteomes" id="UP000002258">
    <property type="component" value="Chromosome 2"/>
</dbReference>
<dbReference type="GO" id="GO:0005635">
    <property type="term" value="C:nuclear envelope"/>
    <property type="evidence" value="ECO:0007669"/>
    <property type="project" value="EnsemblFungi"/>
</dbReference>
<dbReference type="GO" id="GO:0005730">
    <property type="term" value="C:nucleolus"/>
    <property type="evidence" value="ECO:0007669"/>
    <property type="project" value="UniProtKB-SubCell"/>
</dbReference>
<dbReference type="GO" id="GO:0030687">
    <property type="term" value="C:preribosome, large subunit precursor"/>
    <property type="evidence" value="ECO:0007669"/>
    <property type="project" value="EnsemblFungi"/>
</dbReference>
<dbReference type="GO" id="GO:0032040">
    <property type="term" value="C:small-subunit processome"/>
    <property type="evidence" value="ECO:0007669"/>
    <property type="project" value="EnsemblFungi"/>
</dbReference>
<dbReference type="GO" id="GO:0005524">
    <property type="term" value="F:ATP binding"/>
    <property type="evidence" value="ECO:0007669"/>
    <property type="project" value="UniProtKB-KW"/>
</dbReference>
<dbReference type="GO" id="GO:0016887">
    <property type="term" value="F:ATP hydrolysis activity"/>
    <property type="evidence" value="ECO:0007669"/>
    <property type="project" value="RHEA"/>
</dbReference>
<dbReference type="GO" id="GO:0042802">
    <property type="term" value="F:identical protein binding"/>
    <property type="evidence" value="ECO:0007669"/>
    <property type="project" value="EnsemblFungi"/>
</dbReference>
<dbReference type="GO" id="GO:0003723">
    <property type="term" value="F:RNA binding"/>
    <property type="evidence" value="ECO:0007669"/>
    <property type="project" value="UniProtKB-KW"/>
</dbReference>
<dbReference type="GO" id="GO:0003724">
    <property type="term" value="F:RNA helicase activity"/>
    <property type="evidence" value="ECO:0007669"/>
    <property type="project" value="UniProtKB-EC"/>
</dbReference>
<dbReference type="GO" id="GO:0000463">
    <property type="term" value="P:maturation of LSU-rRNA from tricistronic rRNA transcript (SSU-rRNA, 5.8S rRNA, LSU-rRNA)"/>
    <property type="evidence" value="ECO:0007669"/>
    <property type="project" value="EnsemblFungi"/>
</dbReference>
<dbReference type="GO" id="GO:0000462">
    <property type="term" value="P:maturation of SSU-rRNA from tricistronic rRNA transcript (SSU-rRNA, 5.8S rRNA, LSU-rRNA)"/>
    <property type="evidence" value="ECO:0007669"/>
    <property type="project" value="EnsemblFungi"/>
</dbReference>
<dbReference type="GO" id="GO:1990417">
    <property type="term" value="P:snoRNA release from pre-rRNA"/>
    <property type="evidence" value="ECO:0007669"/>
    <property type="project" value="EnsemblFungi"/>
</dbReference>
<dbReference type="CDD" id="cd17942">
    <property type="entry name" value="DEADc_DDX18"/>
    <property type="match status" value="1"/>
</dbReference>
<dbReference type="CDD" id="cd18787">
    <property type="entry name" value="SF2_C_DEAD"/>
    <property type="match status" value="1"/>
</dbReference>
<dbReference type="FunFam" id="3.40.50.300:FF:000379">
    <property type="entry name" value="RNA helicase"/>
    <property type="match status" value="1"/>
</dbReference>
<dbReference type="FunFam" id="3.40.50.300:FF:000460">
    <property type="entry name" value="RNA helicase"/>
    <property type="match status" value="1"/>
</dbReference>
<dbReference type="Gene3D" id="3.40.50.300">
    <property type="entry name" value="P-loop containing nucleotide triphosphate hydrolases"/>
    <property type="match status" value="2"/>
</dbReference>
<dbReference type="InterPro" id="IPR044773">
    <property type="entry name" value="DDX18/Has1_DEADc"/>
</dbReference>
<dbReference type="InterPro" id="IPR011545">
    <property type="entry name" value="DEAD/DEAH_box_helicase_dom"/>
</dbReference>
<dbReference type="InterPro" id="IPR014001">
    <property type="entry name" value="Helicase_ATP-bd"/>
</dbReference>
<dbReference type="InterPro" id="IPR001650">
    <property type="entry name" value="Helicase_C-like"/>
</dbReference>
<dbReference type="InterPro" id="IPR027417">
    <property type="entry name" value="P-loop_NTPase"/>
</dbReference>
<dbReference type="InterPro" id="IPR000629">
    <property type="entry name" value="RNA-helicase_DEAD-box_CS"/>
</dbReference>
<dbReference type="InterPro" id="IPR014014">
    <property type="entry name" value="RNA_helicase_DEAD_Q_motif"/>
</dbReference>
<dbReference type="InterPro" id="IPR025313">
    <property type="entry name" value="SPB4-like_CTE"/>
</dbReference>
<dbReference type="PANTHER" id="PTHR24031">
    <property type="entry name" value="RNA HELICASE"/>
    <property type="match status" value="1"/>
</dbReference>
<dbReference type="Pfam" id="PF13959">
    <property type="entry name" value="CTE_SPB4"/>
    <property type="match status" value="1"/>
</dbReference>
<dbReference type="Pfam" id="PF00270">
    <property type="entry name" value="DEAD"/>
    <property type="match status" value="1"/>
</dbReference>
<dbReference type="Pfam" id="PF00271">
    <property type="entry name" value="Helicase_C"/>
    <property type="match status" value="1"/>
</dbReference>
<dbReference type="SMART" id="SM00487">
    <property type="entry name" value="DEXDc"/>
    <property type="match status" value="1"/>
</dbReference>
<dbReference type="SMART" id="SM01178">
    <property type="entry name" value="DUF4217"/>
    <property type="match status" value="1"/>
</dbReference>
<dbReference type="SMART" id="SM00490">
    <property type="entry name" value="HELICc"/>
    <property type="match status" value="1"/>
</dbReference>
<dbReference type="SUPFAM" id="SSF52540">
    <property type="entry name" value="P-loop containing nucleoside triphosphate hydrolases"/>
    <property type="match status" value="2"/>
</dbReference>
<dbReference type="PROSITE" id="PS00039">
    <property type="entry name" value="DEAD_ATP_HELICASE"/>
    <property type="match status" value="1"/>
</dbReference>
<dbReference type="PROSITE" id="PS51192">
    <property type="entry name" value="HELICASE_ATP_BIND_1"/>
    <property type="match status" value="1"/>
</dbReference>
<dbReference type="PROSITE" id="PS51194">
    <property type="entry name" value="HELICASE_CTER"/>
    <property type="match status" value="1"/>
</dbReference>
<dbReference type="PROSITE" id="PS51195">
    <property type="entry name" value="Q_MOTIF"/>
    <property type="match status" value="1"/>
</dbReference>
<keyword id="KW-0067">ATP-binding</keyword>
<keyword id="KW-0175">Coiled coil</keyword>
<keyword id="KW-0347">Helicase</keyword>
<keyword id="KW-0378">Hydrolase</keyword>
<keyword id="KW-0547">Nucleotide-binding</keyword>
<keyword id="KW-0539">Nucleus</keyword>
<keyword id="KW-1185">Reference proteome</keyword>
<keyword id="KW-0690">Ribosome biogenesis</keyword>
<keyword id="KW-0694">RNA-binding</keyword>
<keyword id="KW-0698">rRNA processing</keyword>